<proteinExistence type="inferred from homology"/>
<accession>B1MVN7</accession>
<organism>
    <name type="scientific">Leuconostoc citreum (strain KM20)</name>
    <dbReference type="NCBI Taxonomy" id="349519"/>
    <lineage>
        <taxon>Bacteria</taxon>
        <taxon>Bacillati</taxon>
        <taxon>Bacillota</taxon>
        <taxon>Bacilli</taxon>
        <taxon>Lactobacillales</taxon>
        <taxon>Lactobacillaceae</taxon>
        <taxon>Leuconostoc</taxon>
    </lineage>
</organism>
<gene>
    <name evidence="1" type="primary">prfA</name>
    <name type="ordered locus">LCK_01467</name>
</gene>
<feature type="chain" id="PRO_1000093473" description="Peptide chain release factor 1">
    <location>
        <begin position="1"/>
        <end position="357"/>
    </location>
</feature>
<feature type="modified residue" description="N5-methylglutamine" evidence="1">
    <location>
        <position position="233"/>
    </location>
</feature>
<keyword id="KW-0963">Cytoplasm</keyword>
<keyword id="KW-0488">Methylation</keyword>
<keyword id="KW-0648">Protein biosynthesis</keyword>
<keyword id="KW-1185">Reference proteome</keyword>
<sequence length="357" mass="40203">MDPIFQSLQTVVDRYDELNEQLADPEIAGDGQKYMALSKEAGEMRETVETYLHYQQVLQDIADAEDLLDDAEMAPLAKEDLNTLKPEKEALESQLKILMLPKDPNDDKNIIMEIRGAAGGDESSLFAADLLDMYRRYAEKQRWTLSIIDETLTEVGGYKEVAVMITGDNVYSKLKFESGAHRVQRVPATETQGRVHTSTATVGVMPEFQEIDFELAESDLEEEFFRSGGAGGQNVNKVSTAVRLVHKPTGIMVKMQEERTQIKNRDKARKLLASRVYDFYAQQNEAEYAEKRKSAVGTGDRSERIRTYNYPQNRVTDHRIGLTLNKLDRVMNGELGEVIDALVIADQTAKLAELNNA</sequence>
<dbReference type="EMBL" id="DQ489736">
    <property type="protein sequence ID" value="ACA83291.1"/>
    <property type="molecule type" value="Genomic_DNA"/>
</dbReference>
<dbReference type="RefSeq" id="WP_004906791.1">
    <property type="nucleotide sequence ID" value="NC_010471.1"/>
</dbReference>
<dbReference type="SMR" id="B1MVN7"/>
<dbReference type="STRING" id="349519.LCK_01467"/>
<dbReference type="KEGG" id="lci:LCK_01467"/>
<dbReference type="eggNOG" id="COG0216">
    <property type="taxonomic scope" value="Bacteria"/>
</dbReference>
<dbReference type="HOGENOM" id="CLU_036856_0_1_9"/>
<dbReference type="OrthoDB" id="9806673at2"/>
<dbReference type="Proteomes" id="UP000002166">
    <property type="component" value="Chromosome"/>
</dbReference>
<dbReference type="GO" id="GO:0005737">
    <property type="term" value="C:cytoplasm"/>
    <property type="evidence" value="ECO:0007669"/>
    <property type="project" value="UniProtKB-SubCell"/>
</dbReference>
<dbReference type="GO" id="GO:0016149">
    <property type="term" value="F:translation release factor activity, codon specific"/>
    <property type="evidence" value="ECO:0007669"/>
    <property type="project" value="UniProtKB-UniRule"/>
</dbReference>
<dbReference type="FunFam" id="3.30.160.20:FF:000004">
    <property type="entry name" value="Peptide chain release factor 1"/>
    <property type="match status" value="1"/>
</dbReference>
<dbReference type="FunFam" id="3.30.70.1660:FF:000002">
    <property type="entry name" value="Peptide chain release factor 1"/>
    <property type="match status" value="1"/>
</dbReference>
<dbReference type="FunFam" id="3.30.70.1660:FF:000004">
    <property type="entry name" value="Peptide chain release factor 1"/>
    <property type="match status" value="1"/>
</dbReference>
<dbReference type="Gene3D" id="3.30.160.20">
    <property type="match status" value="1"/>
</dbReference>
<dbReference type="Gene3D" id="3.30.70.1660">
    <property type="match status" value="1"/>
</dbReference>
<dbReference type="Gene3D" id="6.10.140.1950">
    <property type="match status" value="1"/>
</dbReference>
<dbReference type="HAMAP" id="MF_00093">
    <property type="entry name" value="Rel_fac_1"/>
    <property type="match status" value="1"/>
</dbReference>
<dbReference type="InterPro" id="IPR005139">
    <property type="entry name" value="PCRF"/>
</dbReference>
<dbReference type="InterPro" id="IPR000352">
    <property type="entry name" value="Pep_chain_release_fac_I"/>
</dbReference>
<dbReference type="InterPro" id="IPR045853">
    <property type="entry name" value="Pep_chain_release_fac_I_sf"/>
</dbReference>
<dbReference type="InterPro" id="IPR050057">
    <property type="entry name" value="Prokaryotic/Mito_RF"/>
</dbReference>
<dbReference type="InterPro" id="IPR004373">
    <property type="entry name" value="RF-1"/>
</dbReference>
<dbReference type="NCBIfam" id="TIGR00019">
    <property type="entry name" value="prfA"/>
    <property type="match status" value="1"/>
</dbReference>
<dbReference type="NCBIfam" id="NF001859">
    <property type="entry name" value="PRK00591.1"/>
    <property type="match status" value="1"/>
</dbReference>
<dbReference type="PANTHER" id="PTHR43804">
    <property type="entry name" value="LD18447P"/>
    <property type="match status" value="1"/>
</dbReference>
<dbReference type="PANTHER" id="PTHR43804:SF7">
    <property type="entry name" value="LD18447P"/>
    <property type="match status" value="1"/>
</dbReference>
<dbReference type="Pfam" id="PF03462">
    <property type="entry name" value="PCRF"/>
    <property type="match status" value="1"/>
</dbReference>
<dbReference type="Pfam" id="PF00472">
    <property type="entry name" value="RF-1"/>
    <property type="match status" value="1"/>
</dbReference>
<dbReference type="SMART" id="SM00937">
    <property type="entry name" value="PCRF"/>
    <property type="match status" value="1"/>
</dbReference>
<dbReference type="SUPFAM" id="SSF75620">
    <property type="entry name" value="Release factor"/>
    <property type="match status" value="1"/>
</dbReference>
<dbReference type="PROSITE" id="PS00745">
    <property type="entry name" value="RF_PROK_I"/>
    <property type="match status" value="1"/>
</dbReference>
<reference key="1">
    <citation type="journal article" date="2008" name="J. Bacteriol.">
        <title>Complete genome sequence of Leuconostoc citreum KM20.</title>
        <authorList>
            <person name="Kim J.F."/>
            <person name="Jeong H."/>
            <person name="Lee J.-S."/>
            <person name="Choi S.-H."/>
            <person name="Ha M."/>
            <person name="Hur C.-G."/>
            <person name="Kim J.-S."/>
            <person name="Lee S."/>
            <person name="Park H.-S."/>
            <person name="Park Y.-H."/>
            <person name="Oh T.K."/>
        </authorList>
    </citation>
    <scope>NUCLEOTIDE SEQUENCE [LARGE SCALE GENOMIC DNA]</scope>
    <source>
        <strain>KM20</strain>
    </source>
</reference>
<name>RF1_LEUCK</name>
<protein>
    <recommendedName>
        <fullName evidence="1">Peptide chain release factor 1</fullName>
        <shortName evidence="1">RF-1</shortName>
    </recommendedName>
</protein>
<comment type="function">
    <text evidence="1">Peptide chain release factor 1 directs the termination of translation in response to the peptide chain termination codons UAG and UAA.</text>
</comment>
<comment type="subcellular location">
    <subcellularLocation>
        <location evidence="1">Cytoplasm</location>
    </subcellularLocation>
</comment>
<comment type="PTM">
    <text evidence="1">Methylated by PrmC. Methylation increases the termination efficiency of RF1.</text>
</comment>
<comment type="similarity">
    <text evidence="1">Belongs to the prokaryotic/mitochondrial release factor family.</text>
</comment>
<evidence type="ECO:0000255" key="1">
    <source>
        <dbReference type="HAMAP-Rule" id="MF_00093"/>
    </source>
</evidence>